<protein>
    <recommendedName>
        <fullName evidence="1">Large ribosomal subunit protein uL24</fullName>
    </recommendedName>
    <alternativeName>
        <fullName evidence="2">50S ribosomal protein L24</fullName>
    </alternativeName>
</protein>
<keyword id="KW-1185">Reference proteome</keyword>
<keyword id="KW-0687">Ribonucleoprotein</keyword>
<keyword id="KW-0689">Ribosomal protein</keyword>
<keyword id="KW-0694">RNA-binding</keyword>
<keyword id="KW-0699">rRNA-binding</keyword>
<gene>
    <name evidence="1" type="primary">rplX</name>
    <name type="ordered locus">CKL_0235</name>
</gene>
<proteinExistence type="inferred from homology"/>
<accession>A5N4Q8</accession>
<reference key="1">
    <citation type="journal article" date="2008" name="Proc. Natl. Acad. Sci. U.S.A.">
        <title>The genome of Clostridium kluyveri, a strict anaerobe with unique metabolic features.</title>
        <authorList>
            <person name="Seedorf H."/>
            <person name="Fricke W.F."/>
            <person name="Veith B."/>
            <person name="Brueggemann H."/>
            <person name="Liesegang H."/>
            <person name="Strittmatter A."/>
            <person name="Miethke M."/>
            <person name="Buckel W."/>
            <person name="Hinderberger J."/>
            <person name="Li F."/>
            <person name="Hagemeier C."/>
            <person name="Thauer R.K."/>
            <person name="Gottschalk G."/>
        </authorList>
    </citation>
    <scope>NUCLEOTIDE SEQUENCE [LARGE SCALE GENOMIC DNA]</scope>
    <source>
        <strain>ATCC 8527 / DSM 555 / NBRC 12016 / NCIMB 10680 / K1</strain>
    </source>
</reference>
<dbReference type="EMBL" id="CP000673">
    <property type="protein sequence ID" value="EDK32289.1"/>
    <property type="molecule type" value="Genomic_DNA"/>
</dbReference>
<dbReference type="RefSeq" id="WP_011988814.1">
    <property type="nucleotide sequence ID" value="NC_009706.1"/>
</dbReference>
<dbReference type="SMR" id="A5N4Q8"/>
<dbReference type="STRING" id="431943.CKL_0235"/>
<dbReference type="KEGG" id="ckl:CKL_0235"/>
<dbReference type="eggNOG" id="COG0198">
    <property type="taxonomic scope" value="Bacteria"/>
</dbReference>
<dbReference type="HOGENOM" id="CLU_093315_2_3_9"/>
<dbReference type="Proteomes" id="UP000002411">
    <property type="component" value="Chromosome"/>
</dbReference>
<dbReference type="GO" id="GO:1990904">
    <property type="term" value="C:ribonucleoprotein complex"/>
    <property type="evidence" value="ECO:0007669"/>
    <property type="project" value="UniProtKB-KW"/>
</dbReference>
<dbReference type="GO" id="GO:0005840">
    <property type="term" value="C:ribosome"/>
    <property type="evidence" value="ECO:0007669"/>
    <property type="project" value="UniProtKB-KW"/>
</dbReference>
<dbReference type="GO" id="GO:0019843">
    <property type="term" value="F:rRNA binding"/>
    <property type="evidence" value="ECO:0007669"/>
    <property type="project" value="UniProtKB-UniRule"/>
</dbReference>
<dbReference type="GO" id="GO:0003735">
    <property type="term" value="F:structural constituent of ribosome"/>
    <property type="evidence" value="ECO:0007669"/>
    <property type="project" value="InterPro"/>
</dbReference>
<dbReference type="GO" id="GO:0006412">
    <property type="term" value="P:translation"/>
    <property type="evidence" value="ECO:0007669"/>
    <property type="project" value="UniProtKB-UniRule"/>
</dbReference>
<dbReference type="CDD" id="cd06089">
    <property type="entry name" value="KOW_RPL26"/>
    <property type="match status" value="1"/>
</dbReference>
<dbReference type="FunFam" id="2.30.30.30:FF:000004">
    <property type="entry name" value="50S ribosomal protein L24"/>
    <property type="match status" value="1"/>
</dbReference>
<dbReference type="Gene3D" id="2.30.30.30">
    <property type="match status" value="1"/>
</dbReference>
<dbReference type="HAMAP" id="MF_01326_B">
    <property type="entry name" value="Ribosomal_uL24_B"/>
    <property type="match status" value="1"/>
</dbReference>
<dbReference type="InterPro" id="IPR005824">
    <property type="entry name" value="KOW"/>
</dbReference>
<dbReference type="InterPro" id="IPR014722">
    <property type="entry name" value="Rib_uL2_dom2"/>
</dbReference>
<dbReference type="InterPro" id="IPR003256">
    <property type="entry name" value="Ribosomal_uL24"/>
</dbReference>
<dbReference type="InterPro" id="IPR041988">
    <property type="entry name" value="Ribosomal_uL24_KOW"/>
</dbReference>
<dbReference type="InterPro" id="IPR008991">
    <property type="entry name" value="Translation_prot_SH3-like_sf"/>
</dbReference>
<dbReference type="NCBIfam" id="TIGR01079">
    <property type="entry name" value="rplX_bact"/>
    <property type="match status" value="1"/>
</dbReference>
<dbReference type="PANTHER" id="PTHR12903">
    <property type="entry name" value="MITOCHONDRIAL RIBOSOMAL PROTEIN L24"/>
    <property type="match status" value="1"/>
</dbReference>
<dbReference type="Pfam" id="PF00467">
    <property type="entry name" value="KOW"/>
    <property type="match status" value="1"/>
</dbReference>
<dbReference type="Pfam" id="PF17136">
    <property type="entry name" value="ribosomal_L24"/>
    <property type="match status" value="1"/>
</dbReference>
<dbReference type="SMART" id="SM00739">
    <property type="entry name" value="KOW"/>
    <property type="match status" value="1"/>
</dbReference>
<dbReference type="SUPFAM" id="SSF50104">
    <property type="entry name" value="Translation proteins SH3-like domain"/>
    <property type="match status" value="1"/>
</dbReference>
<sequence>MAKVHVRKKDTVMIISGKDKGKTGEVLAVMPKVSKVLVSGINIVSKHQKPNKQNMEGGIIRKEAAIYSSKVMLYCEKCKSVTRISHKILEDGTKVRVCKKCGETL</sequence>
<feature type="chain" id="PRO_0000355665" description="Large ribosomal subunit protein uL24">
    <location>
        <begin position="1"/>
        <end position="105"/>
    </location>
</feature>
<evidence type="ECO:0000255" key="1">
    <source>
        <dbReference type="HAMAP-Rule" id="MF_01326"/>
    </source>
</evidence>
<evidence type="ECO:0000305" key="2"/>
<name>RL24_CLOK5</name>
<comment type="function">
    <text evidence="1">One of two assembly initiator proteins, it binds directly to the 5'-end of the 23S rRNA, where it nucleates assembly of the 50S subunit.</text>
</comment>
<comment type="function">
    <text evidence="1">One of the proteins that surrounds the polypeptide exit tunnel on the outside of the subunit.</text>
</comment>
<comment type="subunit">
    <text evidence="1">Part of the 50S ribosomal subunit.</text>
</comment>
<comment type="similarity">
    <text evidence="1">Belongs to the universal ribosomal protein uL24 family.</text>
</comment>
<organism>
    <name type="scientific">Clostridium kluyveri (strain ATCC 8527 / DSM 555 / NBRC 12016 / NCIMB 10680 / K1)</name>
    <dbReference type="NCBI Taxonomy" id="431943"/>
    <lineage>
        <taxon>Bacteria</taxon>
        <taxon>Bacillati</taxon>
        <taxon>Bacillota</taxon>
        <taxon>Clostridia</taxon>
        <taxon>Eubacteriales</taxon>
        <taxon>Clostridiaceae</taxon>
        <taxon>Clostridium</taxon>
    </lineage>
</organism>